<name>SRB8_NEUCR</name>
<reference key="1">
    <citation type="journal article" date="2003" name="Nucleic Acids Res.">
        <title>What's in the genome of a filamentous fungus? Analysis of the Neurospora genome sequence.</title>
        <authorList>
            <person name="Mannhaupt G."/>
            <person name="Montrone C."/>
            <person name="Haase D."/>
            <person name="Mewes H.-W."/>
            <person name="Aign V."/>
            <person name="Hoheisel J.D."/>
            <person name="Fartmann B."/>
            <person name="Nyakatura G."/>
            <person name="Kempken F."/>
            <person name="Maier J."/>
            <person name="Schulte U."/>
        </authorList>
    </citation>
    <scope>NUCLEOTIDE SEQUENCE [LARGE SCALE GENOMIC DNA]</scope>
    <source>
        <strain>ATCC 24698 / 74-OR23-1A / CBS 708.71 / DSM 1257 / FGSC 987</strain>
    </source>
</reference>
<reference key="2">
    <citation type="journal article" date="2003" name="Nature">
        <title>The genome sequence of the filamentous fungus Neurospora crassa.</title>
        <authorList>
            <person name="Galagan J.E."/>
            <person name="Calvo S.E."/>
            <person name="Borkovich K.A."/>
            <person name="Selker E.U."/>
            <person name="Read N.D."/>
            <person name="Jaffe D.B."/>
            <person name="FitzHugh W."/>
            <person name="Ma L.-J."/>
            <person name="Smirnov S."/>
            <person name="Purcell S."/>
            <person name="Rehman B."/>
            <person name="Elkins T."/>
            <person name="Engels R."/>
            <person name="Wang S."/>
            <person name="Nielsen C.B."/>
            <person name="Butler J."/>
            <person name="Endrizzi M."/>
            <person name="Qui D."/>
            <person name="Ianakiev P."/>
            <person name="Bell-Pedersen D."/>
            <person name="Nelson M.A."/>
            <person name="Werner-Washburne M."/>
            <person name="Selitrennikoff C.P."/>
            <person name="Kinsey J.A."/>
            <person name="Braun E.L."/>
            <person name="Zelter A."/>
            <person name="Schulte U."/>
            <person name="Kothe G.O."/>
            <person name="Jedd G."/>
            <person name="Mewes H.-W."/>
            <person name="Staben C."/>
            <person name="Marcotte E."/>
            <person name="Greenberg D."/>
            <person name="Roy A."/>
            <person name="Foley K."/>
            <person name="Naylor J."/>
            <person name="Stange-Thomann N."/>
            <person name="Barrett R."/>
            <person name="Gnerre S."/>
            <person name="Kamal M."/>
            <person name="Kamvysselis M."/>
            <person name="Mauceli E.W."/>
            <person name="Bielke C."/>
            <person name="Rudd S."/>
            <person name="Frishman D."/>
            <person name="Krystofova S."/>
            <person name="Rasmussen C."/>
            <person name="Metzenberg R.L."/>
            <person name="Perkins D.D."/>
            <person name="Kroken S."/>
            <person name="Cogoni C."/>
            <person name="Macino G."/>
            <person name="Catcheside D.E.A."/>
            <person name="Li W."/>
            <person name="Pratt R.J."/>
            <person name="Osmani S.A."/>
            <person name="DeSouza C.P.C."/>
            <person name="Glass N.L."/>
            <person name="Orbach M.J."/>
            <person name="Berglund J.A."/>
            <person name="Voelker R."/>
            <person name="Yarden O."/>
            <person name="Plamann M."/>
            <person name="Seiler S."/>
            <person name="Dunlap J.C."/>
            <person name="Radford A."/>
            <person name="Aramayo R."/>
            <person name="Natvig D.O."/>
            <person name="Alex L.A."/>
            <person name="Mannhaupt G."/>
            <person name="Ebbole D.J."/>
            <person name="Freitag M."/>
            <person name="Paulsen I."/>
            <person name="Sachs M.S."/>
            <person name="Lander E.S."/>
            <person name="Nusbaum C."/>
            <person name="Birren B.W."/>
        </authorList>
    </citation>
    <scope>NUCLEOTIDE SEQUENCE [LARGE SCALE GENOMIC DNA]</scope>
    <source>
        <strain>ATCC 24698 / 74-OR23-1A / CBS 708.71 / DSM 1257 / FGSC 987</strain>
    </source>
</reference>
<comment type="function">
    <text evidence="1">Component of the srb8-11 complex. The srb8-11 complex is a regulatory module of the Mediator complex which is itself involved in regulation of basal and activated RNA polymerase II-dependent transcription. The srb8-11 complex may be involved in the transcriptional repression of a subset of genes regulated by Mediator. It may inhibit the association of the Mediator complex with RNA polymerase II to form the holoenzyme complex (By similarity).</text>
</comment>
<comment type="subunit">
    <text evidence="1">Component of the srb8-11 complex, which itself associates with the Mediator complex.</text>
</comment>
<comment type="subcellular location">
    <subcellularLocation>
        <location evidence="3">Nucleus</location>
    </subcellularLocation>
</comment>
<comment type="similarity">
    <text evidence="3">Belongs to the Mediator complex subunit 12 family.</text>
</comment>
<accession>Q7SGG0</accession>
<accession>V5IPX3</accession>
<feature type="chain" id="PRO_0000312975" description="Mediator of RNA polymerase II transcription subunit 12">
    <location>
        <begin position="1"/>
        <end position="1789"/>
    </location>
</feature>
<feature type="region of interest" description="Disordered" evidence="2">
    <location>
        <begin position="1"/>
        <end position="138"/>
    </location>
</feature>
<feature type="region of interest" description="Disordered" evidence="2">
    <location>
        <begin position="156"/>
        <end position="288"/>
    </location>
</feature>
<feature type="region of interest" description="Disordered" evidence="2">
    <location>
        <begin position="1592"/>
        <end position="1656"/>
    </location>
</feature>
<feature type="region of interest" description="Disordered" evidence="2">
    <location>
        <begin position="1707"/>
        <end position="1727"/>
    </location>
</feature>
<feature type="compositionally biased region" description="Low complexity" evidence="2">
    <location>
        <begin position="25"/>
        <end position="66"/>
    </location>
</feature>
<feature type="compositionally biased region" description="Low complexity" evidence="2">
    <location>
        <begin position="81"/>
        <end position="98"/>
    </location>
</feature>
<feature type="compositionally biased region" description="Polar residues" evidence="2">
    <location>
        <begin position="107"/>
        <end position="124"/>
    </location>
</feature>
<feature type="compositionally biased region" description="Basic and acidic residues" evidence="2">
    <location>
        <begin position="220"/>
        <end position="229"/>
    </location>
</feature>
<feature type="compositionally biased region" description="Low complexity" evidence="2">
    <location>
        <begin position="271"/>
        <end position="288"/>
    </location>
</feature>
<feature type="compositionally biased region" description="Low complexity" evidence="2">
    <location>
        <begin position="1592"/>
        <end position="1628"/>
    </location>
</feature>
<feature type="compositionally biased region" description="Low complexity" evidence="2">
    <location>
        <begin position="1647"/>
        <end position="1656"/>
    </location>
</feature>
<feature type="compositionally biased region" description="Low complexity" evidence="2">
    <location>
        <begin position="1707"/>
        <end position="1716"/>
    </location>
</feature>
<sequence>MTSRPPLGVQQRQPQQRKLSGPVLSQQRSLSQSQAQAQAQAQQQQQQQQQQQQQQQQQQQQQQQQQYDASSYLPPPPPVPTRNNNHNNFSNPNNTLNNAFPPELAQQDPTSIVSPADPSGSSPALSVGVGRYGTQRRGGSRLRLELSHNDPFDAFSSPTVIESPGLVEPHTQNGSLTHPMMPLADGPDLGDMSPHHRVSIPPQHLDADVPIPFPQRRPKAVPDHSRREQPPPPPNPARKDTRPKPYTIELPAAAPRYRIRGRSDGQGGQGRSSALATASSSSTTGSSATANYGCADFFPWSGTAGNHPEDQFNDTAIRVGYSEKQFVTPETQSAKTVLFHGLKQRSGLNALSIFFAGVLWHRRNAGQVTAPSTFKPPPRVTLTDTKKEVWLKDLANSAIPLRKLSRSIPHGVRNKVLLDQCLNKNVPIDRAVWLAKCVGTNELRTFRRLGKGNNASVLEGERKWLKDWTLVIENFIERVFFSFGEQNWKAKVNYAIQLAAHLYAEGLMDREHYLDWTVSSLESSHHSQLPMWIIIAQIYWKDLLRLRKYGRRLATALISHYHVIHAHEDRDIYVPLLSKLSHLLGTLMVATPENFVSPSVWVKYRDALKTCLPQGDEARHRSFAGINYRNEQLVASANRSQPAARIILVRNLDQVILEKPMPDEFPAQCWTVSKDKAALVRALLEWCTTPYRPGLAKVYVAHRILMHWSTLRLDVTSAVLGFMEGEALEEMECKDALYHLVSELVRSGIFLVSQYIQWLITRGGLTDPQLVMPDGPPFSRLLAELPSHILGSSQKRSRDALLRRAGFRIADDAQDADMAIRHLRHALGLPAGVTDAVSMGRPFPIKKIARRIEDASRARKAEIASWLRNTVFGGELEHSSLNAFGQHDLSTRLFNSIRTVFEAAQEFSVFADVLRMLTKCSNPEVLASIADTITRYTFVFAALSCLKNLFSILHSRLREVQEQGIGARPLLASLAYLASRVPGMDEVAMQLKSDLAVSDRHNPVDACSPVSDNMVSRLSDHDGDLHEEVEKLLANGTSLDRNTMDRLFSAVIQRLQAYWSKGDEQQRVYGILLKRLRMFNPQHFDELMTRWLLYVRGLDTRATILHLYPLLVSIGCLEMPAILATASESPNALGAGNSRHPQSAVATSQIVQTTFRTRYMQEVLQLFMAPVSSESLLTPEERYRFGILQEQAKKESPRELLCLIQLALAEYTCARAQNDLEELPLDKEANQDRLLRLLKLLVLKDPVGVAKALQIRGPDAQIDGWIDRMTTKLLVTAAGEGTRVTFEQVLNLTNEFTLPFCHVKLLLSLSSNDQQQNAADSGERVPSNVELFMNAMEKSMDAQRVSWIGMLPSLSPDLTHHLKNQAQARFLNLLPSARNPPSMTLDRSMLQMRLQKAENFLAIMDTIIRGSGPMGFRQHQLVPVMVERFTDILELLQTLTPFPSQAGGLGGWGGQGASAAAAGGDSHIDLKSDILNHWLPLFLNFLTLHAQTFDTSKPGNEVRGRALMVCAGLIRELDLIHGPDFDTRQLGGRIFDLACVLVDNLAEDARLQCIQALKSPSDVKLRYIFSYQDNPHANLMLCHKERPTAMAIGTATGTGSPAPGTTPTHTPGVTPGPQNAVGAGSAVSGAGGSGNGGSYFSLPGHTQQAQAQGWHAAQQQQQQQQQQQSQQQQQQQQQQQYQLQQQQQQGGTGPIPSPAISINTNLTHLNLGNNSNPPTPSPMNPTRPAMMMVANPWGGYSWVPTMGGPQERLTPFNFRQWEMLSEPTSQVGENDTAVNLMLFESRKVQ</sequence>
<gene>
    <name type="primary">srb8</name>
    <name type="synonym">med12</name>
    <name type="ORF">B20J13.130</name>
    <name type="ORF">NCU00962</name>
</gene>
<evidence type="ECO:0000250" key="1"/>
<evidence type="ECO:0000256" key="2">
    <source>
        <dbReference type="SAM" id="MobiDB-lite"/>
    </source>
</evidence>
<evidence type="ECO:0000305" key="3"/>
<protein>
    <recommendedName>
        <fullName>Mediator of RNA polymerase II transcription subunit 12</fullName>
    </recommendedName>
    <alternativeName>
        <fullName>Mediator complex subunit 12</fullName>
    </alternativeName>
</protein>
<keyword id="KW-0010">Activator</keyword>
<keyword id="KW-0539">Nucleus</keyword>
<keyword id="KW-1185">Reference proteome</keyword>
<keyword id="KW-0678">Repressor</keyword>
<keyword id="KW-0804">Transcription</keyword>
<keyword id="KW-0805">Transcription regulation</keyword>
<organism>
    <name type="scientific">Neurospora crassa (strain ATCC 24698 / 74-OR23-1A / CBS 708.71 / DSM 1257 / FGSC 987)</name>
    <dbReference type="NCBI Taxonomy" id="367110"/>
    <lineage>
        <taxon>Eukaryota</taxon>
        <taxon>Fungi</taxon>
        <taxon>Dikarya</taxon>
        <taxon>Ascomycota</taxon>
        <taxon>Pezizomycotina</taxon>
        <taxon>Sordariomycetes</taxon>
        <taxon>Sordariomycetidae</taxon>
        <taxon>Sordariales</taxon>
        <taxon>Sordariaceae</taxon>
        <taxon>Neurospora</taxon>
    </lineage>
</organism>
<proteinExistence type="inferred from homology"/>
<dbReference type="EMBL" id="BX842629">
    <property type="protein sequence ID" value="CAE76332.1"/>
    <property type="molecule type" value="Genomic_DNA"/>
</dbReference>
<dbReference type="EMBL" id="CM002236">
    <property type="protein sequence ID" value="ESA44213.1"/>
    <property type="molecule type" value="Genomic_DNA"/>
</dbReference>
<dbReference type="RefSeq" id="XP_011392868.1">
    <property type="nucleotide sequence ID" value="XM_011394566.1"/>
</dbReference>
<dbReference type="SMR" id="Q7SGG0"/>
<dbReference type="STRING" id="367110.Q7SGG0"/>
<dbReference type="PaxDb" id="5141-EFNCRP00000000568"/>
<dbReference type="EnsemblFungi" id="ESA44213">
    <property type="protein sequence ID" value="ESA44213"/>
    <property type="gene ID" value="NCU00962"/>
</dbReference>
<dbReference type="GeneID" id="3881323"/>
<dbReference type="KEGG" id="ncr:NCU00962"/>
<dbReference type="VEuPathDB" id="FungiDB:NCU00962"/>
<dbReference type="HOGENOM" id="CLU_002034_0_0_1"/>
<dbReference type="InParanoid" id="Q7SGG0"/>
<dbReference type="OrthoDB" id="20828at2759"/>
<dbReference type="Proteomes" id="UP000001805">
    <property type="component" value="Chromosome 1, Linkage Group I"/>
</dbReference>
<dbReference type="GO" id="GO:0016592">
    <property type="term" value="C:mediator complex"/>
    <property type="evidence" value="ECO:0000318"/>
    <property type="project" value="GO_Central"/>
</dbReference>
<dbReference type="GO" id="GO:0003713">
    <property type="term" value="F:transcription coactivator activity"/>
    <property type="evidence" value="ECO:0000318"/>
    <property type="project" value="GO_Central"/>
</dbReference>
<dbReference type="GO" id="GO:0045944">
    <property type="term" value="P:positive regulation of transcription by RNA polymerase II"/>
    <property type="evidence" value="ECO:0000318"/>
    <property type="project" value="GO_Central"/>
</dbReference>
<dbReference type="InterPro" id="IPR019035">
    <property type="entry name" value="Mediator_Med12"/>
</dbReference>
<dbReference type="PANTHER" id="PTHR46567">
    <property type="entry name" value="MEDIATOR OF RNA POLYMERASE II TRANSCRIPTION SUBUNIT 12"/>
    <property type="match status" value="1"/>
</dbReference>
<dbReference type="PANTHER" id="PTHR46567:SF1">
    <property type="entry name" value="MEDIATOR OF RNA POLYMERASE II TRANSCRIPTION SUBUNIT 12"/>
    <property type="match status" value="1"/>
</dbReference>
<dbReference type="Pfam" id="PF25326">
    <property type="entry name" value="ARM_SRB8"/>
    <property type="match status" value="1"/>
</dbReference>
<dbReference type="Pfam" id="PF09497">
    <property type="entry name" value="Med12"/>
    <property type="match status" value="1"/>
</dbReference>
<dbReference type="SMART" id="SM01281">
    <property type="entry name" value="Med12"/>
    <property type="match status" value="1"/>
</dbReference>